<organismHost>
    <name type="scientific">Thermoproteus tenax</name>
    <dbReference type="NCBI Taxonomy" id="2271"/>
</organismHost>
<proteinExistence type="predicted"/>
<sequence>MDMILGISAYRKETKTGLRNTIYTAINTGKVKKILLGLDKPEDKEIFNDIINEFKDYIIDVVYAEGLGANRNELLVRGSEENEDYICLADSHLYFITPVADIVKTMCNSQACDFKRFDFGFDVENNPLSVLNRSVHHFGQFNIDRLANNYIFSCEYKYYANNPFLCFKKSAIKELLNIYGGKIIPWQHYGADMEQIYVSIVRRYGRTAGKCIGTSPIYGHRATVSNTEHEFWKSRWTIKDYSEGWYQANACFLALHIPRELWNLKPRIFEPDKCKLHINFIKSTLEDSQASSRGTASMIYAVDGIDRNILNYLGKYTADSTGTVSLTNLQPGKYIAIE</sequence>
<reference key="1">
    <citation type="submission" date="1989-03" db="EMBL/GenBank/DDBJ databases">
        <authorList>
            <person name="Neumann H."/>
        </authorList>
    </citation>
    <scope>NUCLEOTIDE SEQUENCE [GENOMIC DNA]</scope>
</reference>
<name>YORT_TTV1K</name>
<accession>P19304</accession>
<dbReference type="EMBL" id="X14855">
    <property type="protein sequence ID" value="CAA33000.1"/>
    <property type="molecule type" value="Genomic_DNA"/>
</dbReference>
<dbReference type="Proteomes" id="UP000009250">
    <property type="component" value="Genome"/>
</dbReference>
<organism>
    <name type="scientific">Thermoproteus tenax virus 1 (strain KRA1)</name>
    <name type="common">TTV1</name>
    <dbReference type="NCBI Taxonomy" id="10480"/>
    <lineage>
        <taxon>Viruses</taxon>
        <taxon>Adnaviria</taxon>
        <taxon>Zilligvirae</taxon>
        <taxon>Taleaviricota</taxon>
        <taxon>Tokiviricetes</taxon>
        <taxon>Primavirales</taxon>
        <taxon>Tristromaviridae</taxon>
        <taxon>Betatristromavirus</taxon>
        <taxon>Betatristromavirus TTV1</taxon>
    </lineage>
</organism>
<feature type="chain" id="PRO_0000222986" description="Uncharacterized 38.7 kDa protein">
    <location>
        <begin position="1"/>
        <end position="338"/>
    </location>
</feature>
<protein>
    <recommendedName>
        <fullName>Uncharacterized 38.7 kDa protein</fullName>
    </recommendedName>
</protein>
<keyword id="KW-1185">Reference proteome</keyword>